<comment type="function">
    <text evidence="1">Plays an essential role in the initiation and regulation of chromosomal replication. ATP-DnaA binds to the origin of replication (oriC) to initiate formation of the DNA replication initiation complex once per cell cycle. Binds the DnaA box (a 9 base pair repeat at the origin) and separates the double-stranded (ds)DNA. Forms a right-handed helical filament on oriC DNA; dsDNA binds to the exterior of the filament while single-stranded (ss)DNA is stabiized in the filament's interior. The ATP-DnaA-oriC complex binds and stabilizes one strand of the AT-rich DNA unwinding element (DUE), permitting loading of DNA polymerase. After initiation quickly degrades to an ADP-DnaA complex that is not apt for DNA replication. Binds acidic phospholipids.</text>
</comment>
<comment type="subunit">
    <text evidence="1">Oligomerizes as a right-handed, spiral filament on DNA at oriC.</text>
</comment>
<comment type="subcellular location">
    <subcellularLocation>
        <location evidence="1">Cytoplasm</location>
    </subcellularLocation>
</comment>
<comment type="domain">
    <text evidence="1">Domain I is involved in oligomerization and binding regulators, domain II is flexibile and of varying length in different bacteria, domain III forms the AAA+ region, while domain IV binds dsDNA.</text>
</comment>
<comment type="similarity">
    <text evidence="1">Belongs to the DnaA family.</text>
</comment>
<organism>
    <name type="scientific">Streptococcus agalactiae serotype III (strain NEM316)</name>
    <dbReference type="NCBI Taxonomy" id="211110"/>
    <lineage>
        <taxon>Bacteria</taxon>
        <taxon>Bacillati</taxon>
        <taxon>Bacillota</taxon>
        <taxon>Bacilli</taxon>
        <taxon>Lactobacillales</taxon>
        <taxon>Streptococcaceae</taxon>
        <taxon>Streptococcus</taxon>
    </lineage>
</organism>
<feature type="chain" id="PRO_0000114267" description="Chromosomal replication initiator protein DnaA">
    <location>
        <begin position="1"/>
        <end position="453"/>
    </location>
</feature>
<feature type="region of interest" description="Domain I, interacts with DnaA modulators" evidence="1">
    <location>
        <begin position="1"/>
        <end position="78"/>
    </location>
</feature>
<feature type="region of interest" description="Domain II" evidence="1">
    <location>
        <begin position="78"/>
        <end position="112"/>
    </location>
</feature>
<feature type="region of interest" description="Domain III, AAA+ region" evidence="1">
    <location>
        <begin position="113"/>
        <end position="331"/>
    </location>
</feature>
<feature type="region of interest" description="Domain IV, binds dsDNA" evidence="1">
    <location>
        <begin position="332"/>
        <end position="453"/>
    </location>
</feature>
<feature type="binding site" evidence="1">
    <location>
        <position position="157"/>
    </location>
    <ligand>
        <name>ATP</name>
        <dbReference type="ChEBI" id="CHEBI:30616"/>
    </ligand>
</feature>
<feature type="binding site" evidence="1">
    <location>
        <position position="159"/>
    </location>
    <ligand>
        <name>ATP</name>
        <dbReference type="ChEBI" id="CHEBI:30616"/>
    </ligand>
</feature>
<feature type="binding site" evidence="1">
    <location>
        <position position="160"/>
    </location>
    <ligand>
        <name>ATP</name>
        <dbReference type="ChEBI" id="CHEBI:30616"/>
    </ligand>
</feature>
<feature type="binding site" evidence="1">
    <location>
        <position position="161"/>
    </location>
    <ligand>
        <name>ATP</name>
        <dbReference type="ChEBI" id="CHEBI:30616"/>
    </ligand>
</feature>
<name>DNAA_STRA3</name>
<protein>
    <recommendedName>
        <fullName evidence="1">Chromosomal replication initiator protein DnaA</fullName>
    </recommendedName>
</protein>
<evidence type="ECO:0000255" key="1">
    <source>
        <dbReference type="HAMAP-Rule" id="MF_00377"/>
    </source>
</evidence>
<accession>Q8E7Z4</accession>
<gene>
    <name evidence="1" type="primary">dnaA</name>
    <name type="ordered locus">gbs0001</name>
</gene>
<proteinExistence type="inferred from homology"/>
<sequence length="453" mass="51597">MTENEQLFWNRVLELSRSQIAPAAYEFFVLEARLLKIEHQTAVITLDNIEMKKLFWEQNLGPVILTAGFEIFNAEITANYVSNDLHLQETSFSNYQQSSNEVNTLPIRKIDSNLKEKYTFANFVQGDENRWAVSASIAVADSPGTTYNPLFIWGGPGLGKTHLLNAIGNQVLRDNPNARVLYITAENFINEFVSHIRLDSMEELKEKFRNLDLLLIDDIQSLAKKTLGGTQEEFFNTFNALHTNDKQIVLTSDRNPNQLNDLEERLVTRFSWGLPVNITPPDFETRVAILTNKIQEYPYDFPQDTIEYLAGEFDSNVRELEGALKNISLVADFKHAKTITVDIAAEAIRARKNDGPIVTVIPIEEIQIQVGKFYGVTVKEIKATKRTQDIVLARQVAMYLAREMTDNSLPKIGKEFGGRDHSTVLHAYNKIKNMVAQDDNLRIEIETIKNKIR</sequence>
<reference key="1">
    <citation type="journal article" date="2002" name="Mol. Microbiol.">
        <title>Genome sequence of Streptococcus agalactiae, a pathogen causing invasive neonatal disease.</title>
        <authorList>
            <person name="Glaser P."/>
            <person name="Rusniok C."/>
            <person name="Buchrieser C."/>
            <person name="Chevalier F."/>
            <person name="Frangeul L."/>
            <person name="Msadek T."/>
            <person name="Zouine M."/>
            <person name="Couve E."/>
            <person name="Lalioui L."/>
            <person name="Poyart C."/>
            <person name="Trieu-Cuot P."/>
            <person name="Kunst F."/>
        </authorList>
    </citation>
    <scope>NUCLEOTIDE SEQUENCE [LARGE SCALE GENOMIC DNA]</scope>
    <source>
        <strain>NEM316</strain>
    </source>
</reference>
<dbReference type="EMBL" id="AL766843">
    <property type="protein sequence ID" value="CAD45646.1"/>
    <property type="molecule type" value="Genomic_DNA"/>
</dbReference>
<dbReference type="RefSeq" id="WP_000138202.1">
    <property type="nucleotide sequence ID" value="NC_004368.1"/>
</dbReference>
<dbReference type="SMR" id="Q8E7Z4"/>
<dbReference type="GeneID" id="66884915"/>
<dbReference type="KEGG" id="san:dnaA"/>
<dbReference type="eggNOG" id="COG0593">
    <property type="taxonomic scope" value="Bacteria"/>
</dbReference>
<dbReference type="HOGENOM" id="CLU_026910_3_1_9"/>
<dbReference type="Proteomes" id="UP000000823">
    <property type="component" value="Chromosome"/>
</dbReference>
<dbReference type="GO" id="GO:0005737">
    <property type="term" value="C:cytoplasm"/>
    <property type="evidence" value="ECO:0007669"/>
    <property type="project" value="UniProtKB-SubCell"/>
</dbReference>
<dbReference type="GO" id="GO:0005886">
    <property type="term" value="C:plasma membrane"/>
    <property type="evidence" value="ECO:0007669"/>
    <property type="project" value="TreeGrafter"/>
</dbReference>
<dbReference type="GO" id="GO:0005524">
    <property type="term" value="F:ATP binding"/>
    <property type="evidence" value="ECO:0007669"/>
    <property type="project" value="UniProtKB-UniRule"/>
</dbReference>
<dbReference type="GO" id="GO:0016887">
    <property type="term" value="F:ATP hydrolysis activity"/>
    <property type="evidence" value="ECO:0007669"/>
    <property type="project" value="InterPro"/>
</dbReference>
<dbReference type="GO" id="GO:0003688">
    <property type="term" value="F:DNA replication origin binding"/>
    <property type="evidence" value="ECO:0007669"/>
    <property type="project" value="UniProtKB-UniRule"/>
</dbReference>
<dbReference type="GO" id="GO:0008289">
    <property type="term" value="F:lipid binding"/>
    <property type="evidence" value="ECO:0007669"/>
    <property type="project" value="UniProtKB-KW"/>
</dbReference>
<dbReference type="GO" id="GO:0006270">
    <property type="term" value="P:DNA replication initiation"/>
    <property type="evidence" value="ECO:0007669"/>
    <property type="project" value="UniProtKB-UniRule"/>
</dbReference>
<dbReference type="GO" id="GO:0006275">
    <property type="term" value="P:regulation of DNA replication"/>
    <property type="evidence" value="ECO:0007669"/>
    <property type="project" value="UniProtKB-UniRule"/>
</dbReference>
<dbReference type="CDD" id="cd00009">
    <property type="entry name" value="AAA"/>
    <property type="match status" value="1"/>
</dbReference>
<dbReference type="CDD" id="cd06571">
    <property type="entry name" value="Bac_DnaA_C"/>
    <property type="match status" value="1"/>
</dbReference>
<dbReference type="FunFam" id="1.10.1750.10:FF:000002">
    <property type="entry name" value="Chromosomal replication initiator protein DnaA"/>
    <property type="match status" value="1"/>
</dbReference>
<dbReference type="FunFam" id="3.40.50.300:FF:000668">
    <property type="entry name" value="Chromosomal replication initiator protein DnaA"/>
    <property type="match status" value="1"/>
</dbReference>
<dbReference type="Gene3D" id="1.10.1750.10">
    <property type="match status" value="1"/>
</dbReference>
<dbReference type="Gene3D" id="1.10.8.60">
    <property type="match status" value="1"/>
</dbReference>
<dbReference type="Gene3D" id="3.40.50.300">
    <property type="entry name" value="P-loop containing nucleotide triphosphate hydrolases"/>
    <property type="match status" value="1"/>
</dbReference>
<dbReference type="HAMAP" id="MF_00377">
    <property type="entry name" value="DnaA_bact"/>
    <property type="match status" value="1"/>
</dbReference>
<dbReference type="InterPro" id="IPR003593">
    <property type="entry name" value="AAA+_ATPase"/>
</dbReference>
<dbReference type="InterPro" id="IPR001957">
    <property type="entry name" value="Chromosome_initiator_DnaA"/>
</dbReference>
<dbReference type="InterPro" id="IPR020591">
    <property type="entry name" value="Chromosome_initiator_DnaA-like"/>
</dbReference>
<dbReference type="InterPro" id="IPR018312">
    <property type="entry name" value="Chromosome_initiator_DnaA_CS"/>
</dbReference>
<dbReference type="InterPro" id="IPR013159">
    <property type="entry name" value="DnaA_C"/>
</dbReference>
<dbReference type="InterPro" id="IPR013317">
    <property type="entry name" value="DnaA_dom"/>
</dbReference>
<dbReference type="InterPro" id="IPR027417">
    <property type="entry name" value="P-loop_NTPase"/>
</dbReference>
<dbReference type="InterPro" id="IPR010921">
    <property type="entry name" value="Trp_repressor/repl_initiator"/>
</dbReference>
<dbReference type="NCBIfam" id="TIGR00362">
    <property type="entry name" value="DnaA"/>
    <property type="match status" value="1"/>
</dbReference>
<dbReference type="PANTHER" id="PTHR30050">
    <property type="entry name" value="CHROMOSOMAL REPLICATION INITIATOR PROTEIN DNAA"/>
    <property type="match status" value="1"/>
</dbReference>
<dbReference type="PANTHER" id="PTHR30050:SF2">
    <property type="entry name" value="CHROMOSOMAL REPLICATION INITIATOR PROTEIN DNAA"/>
    <property type="match status" value="1"/>
</dbReference>
<dbReference type="Pfam" id="PF00308">
    <property type="entry name" value="Bac_DnaA"/>
    <property type="match status" value="1"/>
</dbReference>
<dbReference type="Pfam" id="PF08299">
    <property type="entry name" value="Bac_DnaA_C"/>
    <property type="match status" value="1"/>
</dbReference>
<dbReference type="PRINTS" id="PR00051">
    <property type="entry name" value="DNAA"/>
</dbReference>
<dbReference type="SMART" id="SM00382">
    <property type="entry name" value="AAA"/>
    <property type="match status" value="1"/>
</dbReference>
<dbReference type="SMART" id="SM00760">
    <property type="entry name" value="Bac_DnaA_C"/>
    <property type="match status" value="1"/>
</dbReference>
<dbReference type="SUPFAM" id="SSF52540">
    <property type="entry name" value="P-loop containing nucleoside triphosphate hydrolases"/>
    <property type="match status" value="1"/>
</dbReference>
<dbReference type="SUPFAM" id="SSF48295">
    <property type="entry name" value="TrpR-like"/>
    <property type="match status" value="1"/>
</dbReference>
<dbReference type="PROSITE" id="PS01008">
    <property type="entry name" value="DNAA"/>
    <property type="match status" value="1"/>
</dbReference>
<keyword id="KW-0067">ATP-binding</keyword>
<keyword id="KW-0963">Cytoplasm</keyword>
<keyword id="KW-0235">DNA replication</keyword>
<keyword id="KW-0238">DNA-binding</keyword>
<keyword id="KW-0446">Lipid-binding</keyword>
<keyword id="KW-0547">Nucleotide-binding</keyword>